<dbReference type="EMBL" id="J05094">
    <property type="protein sequence ID" value="AAA34180.1"/>
    <property type="molecule type" value="mRNA"/>
</dbReference>
<dbReference type="EMBL" id="M59427">
    <property type="protein sequence ID" value="AAA34198.1"/>
    <property type="molecule type" value="Genomic_DNA"/>
</dbReference>
<dbReference type="PIR" id="A39547">
    <property type="entry name" value="A34359"/>
</dbReference>
<dbReference type="SMR" id="P16231"/>
<dbReference type="MEROPS" id="I13.010"/>
<dbReference type="GO" id="GO:0005576">
    <property type="term" value="C:extracellular region"/>
    <property type="evidence" value="ECO:0007669"/>
    <property type="project" value="UniProtKB-SubCell"/>
</dbReference>
<dbReference type="GO" id="GO:0004867">
    <property type="term" value="F:serine-type endopeptidase inhibitor activity"/>
    <property type="evidence" value="ECO:0007669"/>
    <property type="project" value="UniProtKB-KW"/>
</dbReference>
<dbReference type="GO" id="GO:0009611">
    <property type="term" value="P:response to wounding"/>
    <property type="evidence" value="ECO:0007669"/>
    <property type="project" value="InterPro"/>
</dbReference>
<dbReference type="Gene3D" id="3.30.10.10">
    <property type="entry name" value="Trypsin Inhibitor V, subunit A"/>
    <property type="match status" value="1"/>
</dbReference>
<dbReference type="InterPro" id="IPR000864">
    <property type="entry name" value="Prot_inh_pot1"/>
</dbReference>
<dbReference type="InterPro" id="IPR036354">
    <property type="entry name" value="Prot_inh_pot1_sf"/>
</dbReference>
<dbReference type="PANTHER" id="PTHR33091">
    <property type="entry name" value="PROTEIN, PUTATIVE, EXPRESSED-RELATED"/>
    <property type="match status" value="1"/>
</dbReference>
<dbReference type="PANTHER" id="PTHR33091:SF65">
    <property type="entry name" value="WOUND-INDUCED PROTEINASE INHIBITOR 1"/>
    <property type="match status" value="1"/>
</dbReference>
<dbReference type="Pfam" id="PF00280">
    <property type="entry name" value="potato_inhibit"/>
    <property type="match status" value="1"/>
</dbReference>
<dbReference type="PRINTS" id="PR00292">
    <property type="entry name" value="POTATOINHBTR"/>
</dbReference>
<dbReference type="SUPFAM" id="SSF54654">
    <property type="entry name" value="CI-2 family of serine protease inhibitors"/>
    <property type="match status" value="1"/>
</dbReference>
<dbReference type="PROSITE" id="PS00285">
    <property type="entry name" value="POTATO_INHIBITOR"/>
    <property type="match status" value="1"/>
</dbReference>
<name>ICI1_SOLPE</name>
<proteinExistence type="inferred from homology"/>
<evidence type="ECO:0000250" key="1"/>
<evidence type="ECO:0000305" key="2"/>
<comment type="subcellular location">
    <subcellularLocation>
        <location evidence="2">Secreted</location>
    </subcellularLocation>
</comment>
<comment type="similarity">
    <text evidence="2">Belongs to the protease inhibitor I13 (potato type I serine protease inhibitor) family.</text>
</comment>
<feature type="signal peptide">
    <location>
        <begin position="1"/>
        <end position="23"/>
    </location>
</feature>
<feature type="propeptide" id="PRO_0000025300">
    <location>
        <begin position="24"/>
        <end position="36"/>
    </location>
</feature>
<feature type="chain" id="PRO_0000025301" description="Wound-induced proteinase inhibitor 1">
    <location>
        <begin position="37"/>
        <end position="111"/>
    </location>
</feature>
<feature type="site" description="Reactive bond" evidence="1">
    <location>
        <begin position="87"/>
        <end position="88"/>
    </location>
</feature>
<feature type="sequence conflict" description="In Ref. 2; AAA34198." evidence="2" ref="2">
    <original>E</original>
    <variation>R</variation>
    <location>
        <position position="26"/>
    </location>
</feature>
<keyword id="KW-0646">Protease inhibitor</keyword>
<keyword id="KW-0964">Secreted</keyword>
<keyword id="KW-0722">Serine protease inhibitor</keyword>
<keyword id="KW-0732">Signal</keyword>
<sequence>MEAKFAHIILFFLLAFSFETLMARKESDGPEVIKLLKEFESDSRCKGKQFWPELIGVPALYAKGIIEKENPSITNIPILLNGSPVTKDFRCDRVRLFVNILGDVVQIPRVT</sequence>
<organism>
    <name type="scientific">Solanum peruvianum</name>
    <name type="common">Peruvian tomato</name>
    <name type="synonym">Lycopersicon peruvianum</name>
    <dbReference type="NCBI Taxonomy" id="4082"/>
    <lineage>
        <taxon>Eukaryota</taxon>
        <taxon>Viridiplantae</taxon>
        <taxon>Streptophyta</taxon>
        <taxon>Embryophyta</taxon>
        <taxon>Tracheophyta</taxon>
        <taxon>Spermatophyta</taxon>
        <taxon>Magnoliopsida</taxon>
        <taxon>eudicotyledons</taxon>
        <taxon>Gunneridae</taxon>
        <taxon>Pentapetalae</taxon>
        <taxon>asterids</taxon>
        <taxon>lamiids</taxon>
        <taxon>Solanales</taxon>
        <taxon>Solanaceae</taxon>
        <taxon>Solanoideae</taxon>
        <taxon>Solaneae</taxon>
        <taxon>Solanum</taxon>
        <taxon>Solanum subgen. Lycopersicon</taxon>
    </lineage>
</organism>
<reference key="1">
    <citation type="journal article" date="1989" name="J. Biol. Chem.">
        <title>Isolation and characterization of a novel, developmentally regulated proteinase inhibitor I protein and cDNA from the fruit of a wild species of tomato.</title>
        <authorList>
            <person name="Wingate V.P.M."/>
            <person name="Broadway R.M."/>
            <person name="Ryan C.A."/>
        </authorList>
    </citation>
    <scope>NUCLEOTIDE SEQUENCE [MRNA]</scope>
</reference>
<reference key="2">
    <citation type="journal article" date="1991" name="J. Biol. Chem.">
        <title>A novel fruit-expressed trypsin inhibitor I gene from a wild species of tomato.</title>
        <authorList>
            <person name="Wingate V.P.M."/>
            <person name="Ryan C.A."/>
        </authorList>
    </citation>
    <scope>NUCLEOTIDE SEQUENCE [GENOMIC DNA]</scope>
    <source>
        <tissue>Fruit</tissue>
    </source>
</reference>
<protein>
    <recommendedName>
        <fullName>Wound-induced proteinase inhibitor 1</fullName>
    </recommendedName>
    <alternativeName>
        <fullName>Wound-induced proteinase inhibitor I</fullName>
    </alternativeName>
</protein>
<accession>P16231</accession>